<name>BTN1_MYCMD</name>
<organism>
    <name type="scientific">Mycosarcoma maydis</name>
    <name type="common">Corn smut fungus</name>
    <name type="synonym">Ustilago maydis</name>
    <dbReference type="NCBI Taxonomy" id="5270"/>
    <lineage>
        <taxon>Eukaryota</taxon>
        <taxon>Fungi</taxon>
        <taxon>Dikarya</taxon>
        <taxon>Basidiomycota</taxon>
        <taxon>Ustilaginomycotina</taxon>
        <taxon>Ustilaginomycetes</taxon>
        <taxon>Ustilaginales</taxon>
        <taxon>Ustilaginaceae</taxon>
        <taxon>Mycosarcoma</taxon>
    </lineage>
</organism>
<protein>
    <recommendedName>
        <fullName>Protein BTN1</fullName>
    </recommendedName>
</protein>
<accession>Q4P4U7</accession>
<accession>A0A0D1BY42</accession>
<gene>
    <name type="primary">BTN1</name>
    <name type="ORF">UMAG_10856</name>
</gene>
<comment type="function">
    <text evidence="1">Involved in vacuolar transport and vacuole pH homeostasis. Also required for cytokinesis (By similarity).</text>
</comment>
<comment type="subcellular location">
    <subcellularLocation>
        <location evidence="1">Vacuole membrane</location>
        <topology evidence="1">Multi-pass membrane protein</topology>
    </subcellularLocation>
</comment>
<comment type="similarity">
    <text evidence="4">Belongs to the battenin family.</text>
</comment>
<proteinExistence type="inferred from homology"/>
<feature type="chain" id="PRO_0000256265" description="Protein BTN1">
    <location>
        <begin position="1"/>
        <end position="545"/>
    </location>
</feature>
<feature type="transmembrane region" description="Helical" evidence="2">
    <location>
        <begin position="66"/>
        <end position="86"/>
    </location>
</feature>
<feature type="transmembrane region" description="Helical" evidence="2">
    <location>
        <begin position="97"/>
        <end position="117"/>
    </location>
</feature>
<feature type="transmembrane region" description="Helical" evidence="2">
    <location>
        <begin position="127"/>
        <end position="147"/>
    </location>
</feature>
<feature type="transmembrane region" description="Helical" evidence="2">
    <location>
        <begin position="205"/>
        <end position="225"/>
    </location>
</feature>
<feature type="transmembrane region" description="Helical" evidence="2">
    <location>
        <begin position="234"/>
        <end position="254"/>
    </location>
</feature>
<feature type="transmembrane region" description="Helical" evidence="2">
    <location>
        <begin position="322"/>
        <end position="342"/>
    </location>
</feature>
<feature type="transmembrane region" description="Helical" evidence="2">
    <location>
        <begin position="408"/>
        <end position="428"/>
    </location>
</feature>
<feature type="transmembrane region" description="Helical" evidence="2">
    <location>
        <begin position="440"/>
        <end position="460"/>
    </location>
</feature>
<feature type="region of interest" description="Disordered" evidence="3">
    <location>
        <begin position="23"/>
        <end position="49"/>
    </location>
</feature>
<feature type="region of interest" description="Disordered" evidence="3">
    <location>
        <begin position="276"/>
        <end position="304"/>
    </location>
</feature>
<feature type="compositionally biased region" description="Polar residues" evidence="3">
    <location>
        <begin position="34"/>
        <end position="49"/>
    </location>
</feature>
<reference key="1">
    <citation type="journal article" date="2006" name="Nature">
        <title>Insights from the genome of the biotrophic fungal plant pathogen Ustilago maydis.</title>
        <authorList>
            <person name="Kaemper J."/>
            <person name="Kahmann R."/>
            <person name="Boelker M."/>
            <person name="Ma L.-J."/>
            <person name="Brefort T."/>
            <person name="Saville B.J."/>
            <person name="Banuett F."/>
            <person name="Kronstad J.W."/>
            <person name="Gold S.E."/>
            <person name="Mueller O."/>
            <person name="Perlin M.H."/>
            <person name="Woesten H.A.B."/>
            <person name="de Vries R."/>
            <person name="Ruiz-Herrera J."/>
            <person name="Reynaga-Pena C.G."/>
            <person name="Snetselaar K."/>
            <person name="McCann M."/>
            <person name="Perez-Martin J."/>
            <person name="Feldbruegge M."/>
            <person name="Basse C.W."/>
            <person name="Steinberg G."/>
            <person name="Ibeas J.I."/>
            <person name="Holloman W."/>
            <person name="Guzman P."/>
            <person name="Farman M.L."/>
            <person name="Stajich J.E."/>
            <person name="Sentandreu R."/>
            <person name="Gonzalez-Prieto J.M."/>
            <person name="Kennell J.C."/>
            <person name="Molina L."/>
            <person name="Schirawski J."/>
            <person name="Mendoza-Mendoza A."/>
            <person name="Greilinger D."/>
            <person name="Muench K."/>
            <person name="Roessel N."/>
            <person name="Scherer M."/>
            <person name="Vranes M."/>
            <person name="Ladendorf O."/>
            <person name="Vincon V."/>
            <person name="Fuchs U."/>
            <person name="Sandrock B."/>
            <person name="Meng S."/>
            <person name="Ho E.C.H."/>
            <person name="Cahill M.J."/>
            <person name="Boyce K.J."/>
            <person name="Klose J."/>
            <person name="Klosterman S.J."/>
            <person name="Deelstra H.J."/>
            <person name="Ortiz-Castellanos L."/>
            <person name="Li W."/>
            <person name="Sanchez-Alonso P."/>
            <person name="Schreier P.H."/>
            <person name="Haeuser-Hahn I."/>
            <person name="Vaupel M."/>
            <person name="Koopmann E."/>
            <person name="Friedrich G."/>
            <person name="Voss H."/>
            <person name="Schlueter T."/>
            <person name="Margolis J."/>
            <person name="Platt D."/>
            <person name="Swimmer C."/>
            <person name="Gnirke A."/>
            <person name="Chen F."/>
            <person name="Vysotskaia V."/>
            <person name="Mannhaupt G."/>
            <person name="Gueldener U."/>
            <person name="Muensterkoetter M."/>
            <person name="Haase D."/>
            <person name="Oesterheld M."/>
            <person name="Mewes H.-W."/>
            <person name="Mauceli E.W."/>
            <person name="DeCaprio D."/>
            <person name="Wade C.M."/>
            <person name="Butler J."/>
            <person name="Young S.K."/>
            <person name="Jaffe D.B."/>
            <person name="Calvo S.E."/>
            <person name="Nusbaum C."/>
            <person name="Galagan J.E."/>
            <person name="Birren B.W."/>
        </authorList>
    </citation>
    <scope>NUCLEOTIDE SEQUENCE [LARGE SCALE GENOMIC DNA]</scope>
    <source>
        <strain>DSM 14603 / FGSC 9021 / UM521</strain>
    </source>
</reference>
<reference key="2">
    <citation type="submission" date="2014-09" db="EMBL/GenBank/DDBJ databases">
        <authorList>
            <person name="Gueldener U."/>
            <person name="Muensterkoetter M."/>
            <person name="Walter M.C."/>
            <person name="Mannhaupt G."/>
            <person name="Kahmann R."/>
        </authorList>
    </citation>
    <scope>GENOME REANNOTATION</scope>
    <source>
        <strain>DSM 14603 / FGSC 9021 / UM521</strain>
    </source>
</reference>
<sequence length="545" mass="58873">MVTIEALPLRPIEGEQQALHVGAHSSASDPRRTMVTNTSESPLASRQATLTTSTRQKHTSYRLNTAFFLFGLLNNSLYVVILTAALELLPQGVPTGLVSFANIFPALIAKAIWPYFLRGQVRYSKRVWSCAALSFIGMLLVSFFPALAMRLVGISLASFSSGLGELTFLQLSTRYAPKSSETRSGLTAAQAAGAGLETSFAGDAVGWFASGTGAAGLIGAAAWWVVRPLGVQTGMAILSVLPAFMIMAYAIILPSVQELLEGKDGKGGAMYAPLSTEDDAVERSSSDDQPTTANDDRQDSTIHIGPGSEQDVKVRLSFQEKMALLKPMLQPYIIPLVIVYAMEYTINQGIAPTLIYPLPTRSSHPLLSHIIRKLTDYYPLYQLVYQTFVFLSRSSISIFKLPAIPRHLLWLPAVLQTGLLAVLLTESLYAWFRESIASPLVIVLICVEGLAGGSAYVSVFYSIGVDEQGRGIALPSTGEEVDDEGQEEDSAYTMAKKAQEHEFRIGCVGFGDSLGILAASLISMPLQVSLCDAQVRSGRDLCKQT</sequence>
<evidence type="ECO:0000250" key="1"/>
<evidence type="ECO:0000255" key="2"/>
<evidence type="ECO:0000256" key="3">
    <source>
        <dbReference type="SAM" id="MobiDB-lite"/>
    </source>
</evidence>
<evidence type="ECO:0000305" key="4"/>
<keyword id="KW-0029">Amino-acid transport</keyword>
<keyword id="KW-0472">Membrane</keyword>
<keyword id="KW-1185">Reference proteome</keyword>
<keyword id="KW-0812">Transmembrane</keyword>
<keyword id="KW-1133">Transmembrane helix</keyword>
<keyword id="KW-0813">Transport</keyword>
<keyword id="KW-0926">Vacuole</keyword>
<dbReference type="EMBL" id="CM003156">
    <property type="protein sequence ID" value="KIS66807.1"/>
    <property type="molecule type" value="Genomic_DNA"/>
</dbReference>
<dbReference type="RefSeq" id="XP_011391764.1">
    <property type="nucleotide sequence ID" value="XM_011393462.1"/>
</dbReference>
<dbReference type="FunCoup" id="Q4P4U7">
    <property type="interactions" value="88"/>
</dbReference>
<dbReference type="STRING" id="237631.Q4P4U7"/>
<dbReference type="EnsemblFungi" id="KIS66807">
    <property type="protein sequence ID" value="KIS66807"/>
    <property type="gene ID" value="UMAG_10856"/>
</dbReference>
<dbReference type="GeneID" id="23566830"/>
<dbReference type="KEGG" id="uma:UMAG_10856"/>
<dbReference type="VEuPathDB" id="FungiDB:UMAG_10856"/>
<dbReference type="eggNOG" id="KOG3880">
    <property type="taxonomic scope" value="Eukaryota"/>
</dbReference>
<dbReference type="HOGENOM" id="CLU_029663_3_1_1"/>
<dbReference type="InParanoid" id="Q4P4U7"/>
<dbReference type="OrthoDB" id="5965864at2759"/>
<dbReference type="Proteomes" id="UP000000561">
    <property type="component" value="Chromosome 17"/>
</dbReference>
<dbReference type="GO" id="GO:0005774">
    <property type="term" value="C:vacuolar membrane"/>
    <property type="evidence" value="ECO:0007669"/>
    <property type="project" value="UniProtKB-SubCell"/>
</dbReference>
<dbReference type="GO" id="GO:0005773">
    <property type="term" value="C:vacuole"/>
    <property type="evidence" value="ECO:0000318"/>
    <property type="project" value="GO_Central"/>
</dbReference>
<dbReference type="GO" id="GO:0006865">
    <property type="term" value="P:amino acid transport"/>
    <property type="evidence" value="ECO:0007669"/>
    <property type="project" value="UniProtKB-KW"/>
</dbReference>
<dbReference type="GO" id="GO:0051453">
    <property type="term" value="P:regulation of intracellular pH"/>
    <property type="evidence" value="ECO:0000318"/>
    <property type="project" value="GO_Central"/>
</dbReference>
<dbReference type="InterPro" id="IPR003492">
    <property type="entry name" value="Battenin_disease_Cln3"/>
</dbReference>
<dbReference type="InterPro" id="IPR036259">
    <property type="entry name" value="MFS_trans_sf"/>
</dbReference>
<dbReference type="PANTHER" id="PTHR10981">
    <property type="entry name" value="BATTENIN"/>
    <property type="match status" value="1"/>
</dbReference>
<dbReference type="PANTHER" id="PTHR10981:SF0">
    <property type="entry name" value="BATTENIN"/>
    <property type="match status" value="1"/>
</dbReference>
<dbReference type="Pfam" id="PF02487">
    <property type="entry name" value="CLN3"/>
    <property type="match status" value="1"/>
</dbReference>
<dbReference type="PRINTS" id="PR01315">
    <property type="entry name" value="BATTENIN"/>
</dbReference>
<dbReference type="SUPFAM" id="SSF103473">
    <property type="entry name" value="MFS general substrate transporter"/>
    <property type="match status" value="1"/>
</dbReference>